<comment type="function">
    <text evidence="1">RuBisCO catalyzes two reactions: the carboxylation of D-ribulose 1,5-bisphosphate, the primary event in carbon dioxide fixation, as well as the oxidative fragmentation of the pentose substrate in the photorespiration process. Both reactions occur simultaneously and in competition at the same active site.</text>
</comment>
<comment type="catalytic activity">
    <reaction evidence="1">
        <text>2 (2R)-3-phosphoglycerate + 2 H(+) = D-ribulose 1,5-bisphosphate + CO2 + H2O</text>
        <dbReference type="Rhea" id="RHEA:23124"/>
        <dbReference type="ChEBI" id="CHEBI:15377"/>
        <dbReference type="ChEBI" id="CHEBI:15378"/>
        <dbReference type="ChEBI" id="CHEBI:16526"/>
        <dbReference type="ChEBI" id="CHEBI:57870"/>
        <dbReference type="ChEBI" id="CHEBI:58272"/>
        <dbReference type="EC" id="4.1.1.39"/>
    </reaction>
</comment>
<comment type="catalytic activity">
    <reaction evidence="1">
        <text>D-ribulose 1,5-bisphosphate + O2 = 2-phosphoglycolate + (2R)-3-phosphoglycerate + 2 H(+)</text>
        <dbReference type="Rhea" id="RHEA:36631"/>
        <dbReference type="ChEBI" id="CHEBI:15378"/>
        <dbReference type="ChEBI" id="CHEBI:15379"/>
        <dbReference type="ChEBI" id="CHEBI:57870"/>
        <dbReference type="ChEBI" id="CHEBI:58033"/>
        <dbReference type="ChEBI" id="CHEBI:58272"/>
    </reaction>
</comment>
<comment type="cofactor">
    <cofactor evidence="1">
        <name>Mg(2+)</name>
        <dbReference type="ChEBI" id="CHEBI:18420"/>
    </cofactor>
    <text evidence="1">Binds 1 Mg(2+) ion per subunit.</text>
</comment>
<comment type="subunit">
    <text evidence="1">Heterohexadecamer of 8 large chains and 8 small chains.</text>
</comment>
<comment type="subcellular location">
    <subcellularLocation>
        <location>Plastid</location>
        <location>Chloroplast</location>
    </subcellularLocation>
</comment>
<comment type="miscellaneous">
    <text evidence="1">The basic functional RuBisCO is composed of a large chain homodimer in a 'head-to-tail' conformation. In form I RuBisCO this homodimer is arranged in a barrel-like tetramer with the small subunits forming a tetrameric 'cap' on each end of the 'barrel'.</text>
</comment>
<comment type="similarity">
    <text evidence="1">Belongs to the RuBisCO large chain family. Type I subfamily.</text>
</comment>
<evidence type="ECO:0000255" key="1">
    <source>
        <dbReference type="HAMAP-Rule" id="MF_01338"/>
    </source>
</evidence>
<proteinExistence type="inferred from homology"/>
<organism>
    <name type="scientific">Huperzia lucidula</name>
    <name type="common">Shining clubmoss</name>
    <name type="synonym">Lycopodium lucidulum</name>
    <dbReference type="NCBI Taxonomy" id="37429"/>
    <lineage>
        <taxon>Eukaryota</taxon>
        <taxon>Viridiplantae</taxon>
        <taxon>Streptophyta</taxon>
        <taxon>Embryophyta</taxon>
        <taxon>Tracheophyta</taxon>
        <taxon>Lycopodiopsida</taxon>
        <taxon>Lycopodiales</taxon>
        <taxon>Lycopodiaceae</taxon>
        <taxon>Huperzioideae</taxon>
        <taxon>Huperzia</taxon>
    </lineage>
</organism>
<sequence>MSPQTETKTSVGFKAGVRDYRLTYYTPNYKTKDTDILAAFRMTPQPGVPPEEAGAAVAAESSTGTWTTVWTDGLTSLDRYKGRCYEIEAVTGEKNQFIAYVAYPLDLFEEGSVTNLFTSIVGNVFGFKALRALRLEDLRIPPAYSKTFIGPPHGIQVERDKSNKYGRPLLGCTIKPKLGLSAKNYGRAVYECLRGGLDFTKDDENVNSQPFMRWRDRFLFVAEALFKAQAETGEIKGHYLNVTAGTYEELLKRAHCARELGVPIVMHDYLTGGFTANTSLAHYCRDNGLLLHIHRAMHAVIDRQKNHGIHFRVLAKALRMSGGDHIHAGTVVGKLEGERDVTLGFVDLLRDDYIEKDRSRGIYFTQDWVSMPGVLPVASGGIHVWHMPALTEIFGDDSVLQFGGGTLGHPWGNAPGAVANRVALEACVKARNEGRDLAREGNEIIREASQWSPESAAACEVWKEIKFEFEAMDTL</sequence>
<accession>Q5SCV9</accession>
<dbReference type="EC" id="4.1.1.39" evidence="1"/>
<dbReference type="EMBL" id="AY660566">
    <property type="protein sequence ID" value="AAT80717.1"/>
    <property type="molecule type" value="Genomic_DNA"/>
</dbReference>
<dbReference type="RefSeq" id="YP_209521.1">
    <property type="nucleotide sequence ID" value="NC_006861.1"/>
</dbReference>
<dbReference type="SMR" id="Q5SCV9"/>
<dbReference type="GeneID" id="3283816"/>
<dbReference type="GO" id="GO:0009507">
    <property type="term" value="C:chloroplast"/>
    <property type="evidence" value="ECO:0007669"/>
    <property type="project" value="UniProtKB-SubCell"/>
</dbReference>
<dbReference type="GO" id="GO:0000287">
    <property type="term" value="F:magnesium ion binding"/>
    <property type="evidence" value="ECO:0007669"/>
    <property type="project" value="UniProtKB-UniRule"/>
</dbReference>
<dbReference type="GO" id="GO:0004497">
    <property type="term" value="F:monooxygenase activity"/>
    <property type="evidence" value="ECO:0007669"/>
    <property type="project" value="UniProtKB-KW"/>
</dbReference>
<dbReference type="GO" id="GO:0016984">
    <property type="term" value="F:ribulose-bisphosphate carboxylase activity"/>
    <property type="evidence" value="ECO:0007669"/>
    <property type="project" value="UniProtKB-UniRule"/>
</dbReference>
<dbReference type="GO" id="GO:0009853">
    <property type="term" value="P:photorespiration"/>
    <property type="evidence" value="ECO:0007669"/>
    <property type="project" value="UniProtKB-KW"/>
</dbReference>
<dbReference type="GO" id="GO:0019253">
    <property type="term" value="P:reductive pentose-phosphate cycle"/>
    <property type="evidence" value="ECO:0007669"/>
    <property type="project" value="UniProtKB-UniRule"/>
</dbReference>
<dbReference type="CDD" id="cd08212">
    <property type="entry name" value="RuBisCO_large_I"/>
    <property type="match status" value="1"/>
</dbReference>
<dbReference type="FunFam" id="3.20.20.110:FF:000001">
    <property type="entry name" value="Ribulose bisphosphate carboxylase large chain"/>
    <property type="match status" value="1"/>
</dbReference>
<dbReference type="FunFam" id="3.30.70.150:FF:000001">
    <property type="entry name" value="Ribulose bisphosphate carboxylase large chain"/>
    <property type="match status" value="1"/>
</dbReference>
<dbReference type="Gene3D" id="3.20.20.110">
    <property type="entry name" value="Ribulose bisphosphate carboxylase, large subunit, C-terminal domain"/>
    <property type="match status" value="1"/>
</dbReference>
<dbReference type="Gene3D" id="3.30.70.150">
    <property type="entry name" value="RuBisCO large subunit, N-terminal domain"/>
    <property type="match status" value="1"/>
</dbReference>
<dbReference type="HAMAP" id="MF_01338">
    <property type="entry name" value="RuBisCO_L_type1"/>
    <property type="match status" value="1"/>
</dbReference>
<dbReference type="InterPro" id="IPR033966">
    <property type="entry name" value="RuBisCO"/>
</dbReference>
<dbReference type="InterPro" id="IPR020878">
    <property type="entry name" value="RuBisCo_large_chain_AS"/>
</dbReference>
<dbReference type="InterPro" id="IPR000685">
    <property type="entry name" value="RuBisCO_lsu_C"/>
</dbReference>
<dbReference type="InterPro" id="IPR036376">
    <property type="entry name" value="RuBisCO_lsu_C_sf"/>
</dbReference>
<dbReference type="InterPro" id="IPR017443">
    <property type="entry name" value="RuBisCO_lsu_fd_N"/>
</dbReference>
<dbReference type="InterPro" id="IPR036422">
    <property type="entry name" value="RuBisCO_lsu_N_sf"/>
</dbReference>
<dbReference type="InterPro" id="IPR020888">
    <property type="entry name" value="RuBisCO_lsuI"/>
</dbReference>
<dbReference type="NCBIfam" id="NF003252">
    <property type="entry name" value="PRK04208.1"/>
    <property type="match status" value="1"/>
</dbReference>
<dbReference type="PANTHER" id="PTHR42704">
    <property type="entry name" value="RIBULOSE BISPHOSPHATE CARBOXYLASE"/>
    <property type="match status" value="1"/>
</dbReference>
<dbReference type="PANTHER" id="PTHR42704:SF17">
    <property type="entry name" value="RIBULOSE BISPHOSPHATE CARBOXYLASE LARGE CHAIN"/>
    <property type="match status" value="1"/>
</dbReference>
<dbReference type="Pfam" id="PF00016">
    <property type="entry name" value="RuBisCO_large"/>
    <property type="match status" value="1"/>
</dbReference>
<dbReference type="Pfam" id="PF02788">
    <property type="entry name" value="RuBisCO_large_N"/>
    <property type="match status" value="1"/>
</dbReference>
<dbReference type="SFLD" id="SFLDG01052">
    <property type="entry name" value="RuBisCO"/>
    <property type="match status" value="1"/>
</dbReference>
<dbReference type="SFLD" id="SFLDS00014">
    <property type="entry name" value="RuBisCO"/>
    <property type="match status" value="1"/>
</dbReference>
<dbReference type="SFLD" id="SFLDG00301">
    <property type="entry name" value="RuBisCO-like_proteins"/>
    <property type="match status" value="1"/>
</dbReference>
<dbReference type="SUPFAM" id="SSF51649">
    <property type="entry name" value="RuBisCo, C-terminal domain"/>
    <property type="match status" value="1"/>
</dbReference>
<dbReference type="SUPFAM" id="SSF54966">
    <property type="entry name" value="RuBisCO, large subunit, small (N-terminal) domain"/>
    <property type="match status" value="1"/>
</dbReference>
<dbReference type="PROSITE" id="PS00157">
    <property type="entry name" value="RUBISCO_LARGE"/>
    <property type="match status" value="1"/>
</dbReference>
<feature type="propeptide" id="PRO_0000042909" evidence="1">
    <location>
        <begin position="1"/>
        <end position="2"/>
    </location>
</feature>
<feature type="chain" id="PRO_0000042910" description="Ribulose bisphosphate carboxylase large chain">
    <location>
        <begin position="3"/>
        <end position="475"/>
    </location>
</feature>
<feature type="active site" description="Proton acceptor" evidence="1">
    <location>
        <position position="175"/>
    </location>
</feature>
<feature type="active site" description="Proton acceptor" evidence="1">
    <location>
        <position position="294"/>
    </location>
</feature>
<feature type="binding site" description="in homodimeric partner" evidence="1">
    <location>
        <position position="123"/>
    </location>
    <ligand>
        <name>substrate</name>
    </ligand>
</feature>
<feature type="binding site" evidence="1">
    <location>
        <position position="173"/>
    </location>
    <ligand>
        <name>substrate</name>
    </ligand>
</feature>
<feature type="binding site" evidence="1">
    <location>
        <position position="177"/>
    </location>
    <ligand>
        <name>substrate</name>
    </ligand>
</feature>
<feature type="binding site" description="via carbamate group" evidence="1">
    <location>
        <position position="201"/>
    </location>
    <ligand>
        <name>Mg(2+)</name>
        <dbReference type="ChEBI" id="CHEBI:18420"/>
    </ligand>
</feature>
<feature type="binding site" evidence="1">
    <location>
        <position position="203"/>
    </location>
    <ligand>
        <name>Mg(2+)</name>
        <dbReference type="ChEBI" id="CHEBI:18420"/>
    </ligand>
</feature>
<feature type="binding site" evidence="1">
    <location>
        <position position="204"/>
    </location>
    <ligand>
        <name>Mg(2+)</name>
        <dbReference type="ChEBI" id="CHEBI:18420"/>
    </ligand>
</feature>
<feature type="binding site" evidence="1">
    <location>
        <position position="295"/>
    </location>
    <ligand>
        <name>substrate</name>
    </ligand>
</feature>
<feature type="binding site" evidence="1">
    <location>
        <position position="327"/>
    </location>
    <ligand>
        <name>substrate</name>
    </ligand>
</feature>
<feature type="binding site" evidence="1">
    <location>
        <position position="379"/>
    </location>
    <ligand>
        <name>substrate</name>
    </ligand>
</feature>
<feature type="site" description="Transition state stabilizer" evidence="1">
    <location>
        <position position="334"/>
    </location>
</feature>
<feature type="modified residue" description="N-acetylproline" evidence="1">
    <location>
        <position position="3"/>
    </location>
</feature>
<feature type="modified residue" description="N6,N6,N6-trimethyllysine" evidence="1">
    <location>
        <position position="14"/>
    </location>
</feature>
<feature type="modified residue" description="N6-carboxylysine" evidence="1">
    <location>
        <position position="201"/>
    </location>
</feature>
<reference key="1">
    <citation type="journal article" date="2005" name="Gene">
        <title>The first complete chloroplast genome sequence of a lycophyte, Huperzia lucidula (Lycopodiaceae).</title>
        <authorList>
            <person name="Wolf P.G."/>
            <person name="Karol K.G."/>
            <person name="Mandoli D.F."/>
            <person name="Kuehl J.V."/>
            <person name="Arumuganathan K."/>
            <person name="Ellis M.W."/>
            <person name="Mishler B.D."/>
            <person name="Kelch D.G."/>
            <person name="Olmstead R.G."/>
            <person name="Boore J.L."/>
        </authorList>
    </citation>
    <scope>NUCLEOTIDE SEQUENCE [LARGE SCALE GENOMIC DNA]</scope>
</reference>
<geneLocation type="chloroplast"/>
<name>RBL_HUPLU</name>
<protein>
    <recommendedName>
        <fullName evidence="1">Ribulose bisphosphate carboxylase large chain</fullName>
        <shortName evidence="1">RuBisCO large subunit</shortName>
        <ecNumber evidence="1">4.1.1.39</ecNumber>
    </recommendedName>
</protein>
<keyword id="KW-0007">Acetylation</keyword>
<keyword id="KW-0113">Calvin cycle</keyword>
<keyword id="KW-0120">Carbon dioxide fixation</keyword>
<keyword id="KW-0150">Chloroplast</keyword>
<keyword id="KW-0456">Lyase</keyword>
<keyword id="KW-0460">Magnesium</keyword>
<keyword id="KW-0479">Metal-binding</keyword>
<keyword id="KW-0488">Methylation</keyword>
<keyword id="KW-0503">Monooxygenase</keyword>
<keyword id="KW-0560">Oxidoreductase</keyword>
<keyword id="KW-0601">Photorespiration</keyword>
<keyword id="KW-0602">Photosynthesis</keyword>
<keyword id="KW-0934">Plastid</keyword>
<gene>
    <name evidence="1" type="primary">rbcL</name>
</gene>